<comment type="function">
    <text>Transcriptional coactivator of the p300/CBP-mediated transcription complex. Acts as a bridge, linking TFAP2 transcription factors and the p300/CBP transcriptional coactivator complex in order to stimulate TFAP2-mediated transcriptional activation. Positively regulates TGF-beta signaling through its association with the SMAD/p300/CBP-mediated transcriptional coactivator complex. Stimulates the peroxisome proliferator-activated receptors PPARA transcriptional activity. Enhances estrogen-dependent transactivation mediated by estrogen receptors. Also acts as a transcriptional corepressor; interferes with the binding of the transcription factors HIF1A or STAT2 and the p300/CBP transcriptional coactivator complex. Participates in sex determination and early gonad development by stimulating transcription activation of SRY. Plays a role in controlling left-right patterning during embryogenesis; potentiates transcriptional activation of NODAL-mediated gene transcription in the left lateral plate mesoderm (LPM). Plays an essential role in differentiation of the adrenal cortex from the adrenogonadal primordium (AGP); stimulates WT1-mediated transcription activation thereby up-regulating the nuclear hormone receptor NR5A1 promoter activity. Associates with chromatin to the PITX2 P1 promoter region.</text>
</comment>
<comment type="subunit">
    <text evidence="1">Interacts (via C-terminus) with SMAD2. Interacts (via C-terminus) with SMAD3 (via MH2 domain). Interacts with LHX2 (via LIM domains). Interacts with WT1 (By similarity). Interacts (via C-terminus) with EP300 (via CH1 domain); the interaction is stimulated in response to hypoxia. Interacts with PPARA. Interacts (via C-terminus) with TFAP2A, TFAP2B and TFAP2C.</text>
</comment>
<comment type="subcellular location">
    <subcellularLocation>
        <location evidence="1">Nucleus</location>
    </subcellularLocation>
    <text evidence="1">Colocalizes with EP300 in dot-like structures.</text>
</comment>
<comment type="similarity">
    <text evidence="3">Belongs to the CITED family.</text>
</comment>
<sequence length="273" mass="28665">MADHMMAMNHGRFPDGTNGLHHHPAHRMGMGQFPSPHHHQQQQPQHAFNALMGEHIHYGAGTMNATSGIRHAMGPGTVNGGHPPSALAPAARFNNSQFMAPPVASQGGSLPASMQLQKLNNQYFNHHPYPHNHYMPDLHPAAGHQMNGTNQHFRDCNPKHSGGSSTPGGSGGSSTPGGSGGSAGGGAGSSNSGGGSGGSGSSNMPASVAHVPAAMLPPNVIDTDFIDEEVLMSLVIXMGLDRIKELPELWLGQNEFDFMTDFVCKQQPSRVSC</sequence>
<accession>A1YFU7</accession>
<gene>
    <name type="primary">CITED2</name>
</gene>
<dbReference type="EMBL" id="DQ977048">
    <property type="protein sequence ID" value="ABM47759.1"/>
    <property type="molecule type" value="Genomic_DNA"/>
</dbReference>
<dbReference type="GO" id="GO:0005634">
    <property type="term" value="C:nucleus"/>
    <property type="evidence" value="ECO:0007669"/>
    <property type="project" value="UniProtKB-SubCell"/>
</dbReference>
<dbReference type="GO" id="GO:0003682">
    <property type="term" value="F:chromatin binding"/>
    <property type="evidence" value="ECO:0000250"/>
    <property type="project" value="UniProtKB"/>
</dbReference>
<dbReference type="GO" id="GO:0003713">
    <property type="term" value="F:transcription coactivator activity"/>
    <property type="evidence" value="ECO:0000250"/>
    <property type="project" value="UniProtKB"/>
</dbReference>
<dbReference type="GO" id="GO:0003714">
    <property type="term" value="F:transcription corepressor activity"/>
    <property type="evidence" value="ECO:0000250"/>
    <property type="project" value="UniProtKB"/>
</dbReference>
<dbReference type="GO" id="GO:0035802">
    <property type="term" value="P:adrenal cortex formation"/>
    <property type="evidence" value="ECO:0000250"/>
    <property type="project" value="UniProtKB"/>
</dbReference>
<dbReference type="GO" id="GO:0030154">
    <property type="term" value="P:cell differentiation"/>
    <property type="evidence" value="ECO:0007669"/>
    <property type="project" value="UniProtKB-KW"/>
</dbReference>
<dbReference type="GO" id="GO:0060972">
    <property type="term" value="P:left/right pattern formation"/>
    <property type="evidence" value="ECO:0007669"/>
    <property type="project" value="TreeGrafter"/>
</dbReference>
<dbReference type="GO" id="GO:0045893">
    <property type="term" value="P:positive regulation of DNA-templated transcription"/>
    <property type="evidence" value="ECO:0000250"/>
    <property type="project" value="UniProtKB"/>
</dbReference>
<dbReference type="GO" id="GO:2000020">
    <property type="term" value="P:positive regulation of male gonad development"/>
    <property type="evidence" value="ECO:0000250"/>
    <property type="project" value="UniProtKB"/>
</dbReference>
<dbReference type="GO" id="GO:0035360">
    <property type="term" value="P:positive regulation of peroxisome proliferator activated receptor signaling pathway"/>
    <property type="evidence" value="ECO:0000250"/>
    <property type="project" value="UniProtKB"/>
</dbReference>
<dbReference type="GO" id="GO:0003156">
    <property type="term" value="P:regulation of animal organ formation"/>
    <property type="evidence" value="ECO:0000250"/>
    <property type="project" value="UniProtKB"/>
</dbReference>
<dbReference type="GO" id="GO:0043627">
    <property type="term" value="P:response to estrogen"/>
    <property type="evidence" value="ECO:0000250"/>
    <property type="project" value="UniProtKB"/>
</dbReference>
<dbReference type="GO" id="GO:0001666">
    <property type="term" value="P:response to hypoxia"/>
    <property type="evidence" value="ECO:0000250"/>
    <property type="project" value="UniProtKB"/>
</dbReference>
<dbReference type="GO" id="GO:0007530">
    <property type="term" value="P:sex determination"/>
    <property type="evidence" value="ECO:0000250"/>
    <property type="project" value="UniProtKB"/>
</dbReference>
<dbReference type="FunFam" id="6.10.140.2200:FF:000001">
    <property type="entry name" value="Cbp/p300-interacting transactivator 2 isoform 1"/>
    <property type="match status" value="1"/>
</dbReference>
<dbReference type="Gene3D" id="6.10.140.2200">
    <property type="match status" value="1"/>
</dbReference>
<dbReference type="InterPro" id="IPR007576">
    <property type="entry name" value="CITED"/>
</dbReference>
<dbReference type="PANTHER" id="PTHR17045:SF7">
    <property type="entry name" value="CBP_P300-INTERACTING TRANSACTIVATOR 2"/>
    <property type="match status" value="1"/>
</dbReference>
<dbReference type="PANTHER" id="PTHR17045">
    <property type="entry name" value="MELANOCYTE SPECIFIC GENE RELATED CITED"/>
    <property type="match status" value="1"/>
</dbReference>
<dbReference type="Pfam" id="PF04487">
    <property type="entry name" value="CITED"/>
    <property type="match status" value="1"/>
</dbReference>
<keyword id="KW-0010">Activator</keyword>
<keyword id="KW-0217">Developmental protein</keyword>
<keyword id="KW-0221">Differentiation</keyword>
<keyword id="KW-0539">Nucleus</keyword>
<keyword id="KW-0678">Repressor</keyword>
<keyword id="KW-0804">Transcription</keyword>
<keyword id="KW-0805">Transcription regulation</keyword>
<name>CITE2_SAGLB</name>
<evidence type="ECO:0000250" key="1"/>
<evidence type="ECO:0000256" key="2">
    <source>
        <dbReference type="SAM" id="MobiDB-lite"/>
    </source>
</evidence>
<evidence type="ECO:0000305" key="3"/>
<protein>
    <recommendedName>
        <fullName>Cbp/p300-interacting transactivator 2</fullName>
    </recommendedName>
</protein>
<organism>
    <name type="scientific">Saguinus labiatus</name>
    <name type="common">Red-chested mustached tamarin</name>
    <dbReference type="NCBI Taxonomy" id="78454"/>
    <lineage>
        <taxon>Eukaryota</taxon>
        <taxon>Metazoa</taxon>
        <taxon>Chordata</taxon>
        <taxon>Craniata</taxon>
        <taxon>Vertebrata</taxon>
        <taxon>Euteleostomi</taxon>
        <taxon>Mammalia</taxon>
        <taxon>Eutheria</taxon>
        <taxon>Euarchontoglires</taxon>
        <taxon>Primates</taxon>
        <taxon>Haplorrhini</taxon>
        <taxon>Platyrrhini</taxon>
        <taxon>Cebidae</taxon>
        <taxon>Callitrichinae</taxon>
        <taxon>Saguinus</taxon>
    </lineage>
</organism>
<feature type="chain" id="PRO_0000285516" description="Cbp/p300-interacting transactivator 2">
    <location>
        <begin position="1"/>
        <end position="273"/>
    </location>
</feature>
<feature type="region of interest" description="Disordered" evidence="2">
    <location>
        <begin position="137"/>
        <end position="204"/>
    </location>
</feature>
<feature type="compositionally biased region" description="Gly residues" evidence="2">
    <location>
        <begin position="165"/>
        <end position="200"/>
    </location>
</feature>
<reference key="1">
    <citation type="submission" date="2006-08" db="EMBL/GenBank/DDBJ databases">
        <title>Positive selection in transcription factor genes on the human lineage.</title>
        <authorList>
            <person name="Nickel G.C."/>
            <person name="Tefft D.L."/>
            <person name="Trevarthen K."/>
            <person name="Funt J."/>
            <person name="Adams M.D."/>
        </authorList>
    </citation>
    <scope>NUCLEOTIDE SEQUENCE [GENOMIC DNA]</scope>
</reference>
<proteinExistence type="inferred from homology"/>